<accession>Q3K2E1</accession>
<comment type="function">
    <text evidence="1">Displays ATPase and GTPase activities.</text>
</comment>
<comment type="similarity">
    <text evidence="1">Belongs to the RapZ-like family.</text>
</comment>
<sequence>MSDEQIKLVIVTGMSGAGKTVAIQSFEDLGYFTIDNMPPTLVPKFLELAAQSGDTSKIAMVVDMRSRLFFREINSILDSLEINDNINFKILFLDATDTELVSRYKETRRSHPLAADGRVLDGISLERELLAPLKSMSQNVVDTSELTPRQLRKVISKEFSNQDSQSSFRIEVMSFGFKYGIPLDADLVFDVRFLPNPYYKPELRDKTGLDTEVYDYVMSFDESDDFYDHLLALIKPILPGYQNEGKSVLTVAIGCTGGQHRSTAFAHRLSEDLKADWTVNESHRDKNKRKETVNRS</sequence>
<name>Y681_STRA1</name>
<organism>
    <name type="scientific">Streptococcus agalactiae serotype Ia (strain ATCC 27591 / A909 / CDC SS700)</name>
    <dbReference type="NCBI Taxonomy" id="205921"/>
    <lineage>
        <taxon>Bacteria</taxon>
        <taxon>Bacillati</taxon>
        <taxon>Bacillota</taxon>
        <taxon>Bacilli</taxon>
        <taxon>Lactobacillales</taxon>
        <taxon>Streptococcaceae</taxon>
        <taxon>Streptococcus</taxon>
    </lineage>
</organism>
<protein>
    <recommendedName>
        <fullName evidence="1">Nucleotide-binding protein SAK_0681</fullName>
    </recommendedName>
</protein>
<gene>
    <name type="ordered locus">SAK_0681</name>
</gene>
<evidence type="ECO:0000255" key="1">
    <source>
        <dbReference type="HAMAP-Rule" id="MF_00636"/>
    </source>
</evidence>
<feature type="chain" id="PRO_0000259007" description="Nucleotide-binding protein SAK_0681">
    <location>
        <begin position="1"/>
        <end position="296"/>
    </location>
</feature>
<feature type="binding site" evidence="1">
    <location>
        <begin position="13"/>
        <end position="20"/>
    </location>
    <ligand>
        <name>ATP</name>
        <dbReference type="ChEBI" id="CHEBI:30616"/>
    </ligand>
</feature>
<feature type="binding site" evidence="1">
    <location>
        <begin position="63"/>
        <end position="66"/>
    </location>
    <ligand>
        <name>GTP</name>
        <dbReference type="ChEBI" id="CHEBI:37565"/>
    </ligand>
</feature>
<dbReference type="EMBL" id="CP000114">
    <property type="protein sequence ID" value="ABA45007.1"/>
    <property type="molecule type" value="Genomic_DNA"/>
</dbReference>
<dbReference type="SMR" id="Q3K2E1"/>
<dbReference type="KEGG" id="sak:SAK_0681"/>
<dbReference type="HOGENOM" id="CLU_059558_0_0_9"/>
<dbReference type="GO" id="GO:0005524">
    <property type="term" value="F:ATP binding"/>
    <property type="evidence" value="ECO:0007669"/>
    <property type="project" value="UniProtKB-UniRule"/>
</dbReference>
<dbReference type="GO" id="GO:0005525">
    <property type="term" value="F:GTP binding"/>
    <property type="evidence" value="ECO:0007669"/>
    <property type="project" value="UniProtKB-UniRule"/>
</dbReference>
<dbReference type="Gene3D" id="3.40.50.300">
    <property type="entry name" value="P-loop containing nucleotide triphosphate hydrolases"/>
    <property type="match status" value="1"/>
</dbReference>
<dbReference type="HAMAP" id="MF_00636">
    <property type="entry name" value="RapZ_like"/>
    <property type="match status" value="1"/>
</dbReference>
<dbReference type="InterPro" id="IPR027417">
    <property type="entry name" value="P-loop_NTPase"/>
</dbReference>
<dbReference type="InterPro" id="IPR005337">
    <property type="entry name" value="RapZ-like"/>
</dbReference>
<dbReference type="InterPro" id="IPR053930">
    <property type="entry name" value="RapZ-like_N"/>
</dbReference>
<dbReference type="InterPro" id="IPR053931">
    <property type="entry name" value="RapZ_C"/>
</dbReference>
<dbReference type="NCBIfam" id="NF003828">
    <property type="entry name" value="PRK05416.1"/>
    <property type="match status" value="1"/>
</dbReference>
<dbReference type="PANTHER" id="PTHR30448">
    <property type="entry name" value="RNASE ADAPTER PROTEIN RAPZ"/>
    <property type="match status" value="1"/>
</dbReference>
<dbReference type="PANTHER" id="PTHR30448:SF0">
    <property type="entry name" value="RNASE ADAPTER PROTEIN RAPZ"/>
    <property type="match status" value="1"/>
</dbReference>
<dbReference type="Pfam" id="PF22740">
    <property type="entry name" value="PapZ_C"/>
    <property type="match status" value="1"/>
</dbReference>
<dbReference type="Pfam" id="PF03668">
    <property type="entry name" value="RapZ-like_N"/>
    <property type="match status" value="1"/>
</dbReference>
<dbReference type="PIRSF" id="PIRSF005052">
    <property type="entry name" value="P-loopkin"/>
    <property type="match status" value="1"/>
</dbReference>
<dbReference type="SUPFAM" id="SSF52540">
    <property type="entry name" value="P-loop containing nucleoside triphosphate hydrolases"/>
    <property type="match status" value="1"/>
</dbReference>
<reference key="1">
    <citation type="journal article" date="2005" name="Proc. Natl. Acad. Sci. U.S.A.">
        <title>Genome analysis of multiple pathogenic isolates of Streptococcus agalactiae: implications for the microbial 'pan-genome'.</title>
        <authorList>
            <person name="Tettelin H."/>
            <person name="Masignani V."/>
            <person name="Cieslewicz M.J."/>
            <person name="Donati C."/>
            <person name="Medini D."/>
            <person name="Ward N.L."/>
            <person name="Angiuoli S.V."/>
            <person name="Crabtree J."/>
            <person name="Jones A.L."/>
            <person name="Durkin A.S."/>
            <person name="DeBoy R.T."/>
            <person name="Davidsen T.M."/>
            <person name="Mora M."/>
            <person name="Scarselli M."/>
            <person name="Margarit y Ros I."/>
            <person name="Peterson J.D."/>
            <person name="Hauser C.R."/>
            <person name="Sundaram J.P."/>
            <person name="Nelson W.C."/>
            <person name="Madupu R."/>
            <person name="Brinkac L.M."/>
            <person name="Dodson R.J."/>
            <person name="Rosovitz M.J."/>
            <person name="Sullivan S.A."/>
            <person name="Daugherty S.C."/>
            <person name="Haft D.H."/>
            <person name="Selengut J."/>
            <person name="Gwinn M.L."/>
            <person name="Zhou L."/>
            <person name="Zafar N."/>
            <person name="Khouri H."/>
            <person name="Radune D."/>
            <person name="Dimitrov G."/>
            <person name="Watkins K."/>
            <person name="O'Connor K.J."/>
            <person name="Smith S."/>
            <person name="Utterback T.R."/>
            <person name="White O."/>
            <person name="Rubens C.E."/>
            <person name="Grandi G."/>
            <person name="Madoff L.C."/>
            <person name="Kasper D.L."/>
            <person name="Telford J.L."/>
            <person name="Wessels M.R."/>
            <person name="Rappuoli R."/>
            <person name="Fraser C.M."/>
        </authorList>
    </citation>
    <scope>NUCLEOTIDE SEQUENCE [LARGE SCALE GENOMIC DNA]</scope>
    <source>
        <strain>ATCC 27591 / A909 / CDC SS700</strain>
    </source>
</reference>
<keyword id="KW-0067">ATP-binding</keyword>
<keyword id="KW-0342">GTP-binding</keyword>
<keyword id="KW-0547">Nucleotide-binding</keyword>
<proteinExistence type="inferred from homology"/>